<reference key="1">
    <citation type="journal article" date="1997" name="Genetics">
        <title>Gene flow and natural selection in the origin of Drosophila pseudoobscura and close relatives.</title>
        <authorList>
            <person name="Wang R.L."/>
            <person name="Wakeley J."/>
            <person name="Hey J."/>
        </authorList>
    </citation>
    <scope>NUCLEOTIDE SEQUENCE [GENOMIC DNA]</scope>
    <scope>VARIANT VAL-79</scope>
    <source>
        <strain>Bogota60</strain>
        <strain>Bogota61</strain>
        <strain>Bogota62</strain>
        <strain>Bogota63</strain>
        <strain>Bogota67</strain>
        <strain>Bogota70</strain>
        <strain>Bogota73</strain>
        <strain>Bogota74</strain>
        <strain>Bogota77</strain>
    </source>
</reference>
<proteinExistence type="inferred from homology"/>
<comment type="function">
    <text evidence="1">Molecular chaperone that promotes the maturation, structural maintenance and proper regulation of specific target proteins involved for instance in cell cycle control and signal transduction. Undergoes a functional cycle that is linked to its ATPase activity. This cycle probably induces conformational changes in the client proteins, thereby causing their activation. Interacts dynamically with various co-chaperones that modulate its substrate recognition, ATPase cycle and chaperone function. Required for piRNA biogenesis by facilitating loading of piRNAs into PIWI proteins (By similarity).</text>
</comment>
<comment type="subunit">
    <text evidence="1">Homodimer. Interacts with shu (By similarity).</text>
</comment>
<comment type="subcellular location">
    <subcellularLocation>
        <location>Cytoplasm</location>
    </subcellularLocation>
</comment>
<comment type="similarity">
    <text evidence="4">Belongs to the heat shock protein 90 family.</text>
</comment>
<organism>
    <name type="scientific">Drosophila pseudoobscura bogotana</name>
    <name type="common">Fruit fly</name>
    <dbReference type="NCBI Taxonomy" id="46244"/>
    <lineage>
        <taxon>Eukaryota</taxon>
        <taxon>Metazoa</taxon>
        <taxon>Ecdysozoa</taxon>
        <taxon>Arthropoda</taxon>
        <taxon>Hexapoda</taxon>
        <taxon>Insecta</taxon>
        <taxon>Pterygota</taxon>
        <taxon>Neoptera</taxon>
        <taxon>Endopterygota</taxon>
        <taxon>Diptera</taxon>
        <taxon>Brachycera</taxon>
        <taxon>Muscomorpha</taxon>
        <taxon>Ephydroidea</taxon>
        <taxon>Drosophilidae</taxon>
        <taxon>Drosophila</taxon>
        <taxon>Sophophora</taxon>
    </lineage>
</organism>
<feature type="chain" id="PRO_0000062932" description="Heat shock protein 83">
    <location>
        <begin position="1"/>
        <end position="269" status="greater than"/>
    </location>
</feature>
<feature type="region of interest" description="Disordered" evidence="2">
    <location>
        <begin position="206"/>
        <end position="269"/>
    </location>
</feature>
<feature type="compositionally biased region" description="Basic and acidic residues" evidence="2">
    <location>
        <begin position="209"/>
        <end position="218"/>
    </location>
</feature>
<feature type="compositionally biased region" description="Basic and acidic residues" evidence="2">
    <location>
        <begin position="225"/>
        <end position="245"/>
    </location>
</feature>
<feature type="compositionally biased region" description="Basic residues" evidence="2">
    <location>
        <begin position="260"/>
        <end position="269"/>
    </location>
</feature>
<feature type="binding site" evidence="1">
    <location>
        <position position="39"/>
    </location>
    <ligand>
        <name>ATP</name>
        <dbReference type="ChEBI" id="CHEBI:30616"/>
    </ligand>
</feature>
<feature type="binding site" evidence="1">
    <location>
        <position position="81"/>
    </location>
    <ligand>
        <name>ATP</name>
        <dbReference type="ChEBI" id="CHEBI:30616"/>
    </ligand>
</feature>
<feature type="binding site" evidence="1">
    <location>
        <position position="100"/>
    </location>
    <ligand>
        <name>ATP</name>
        <dbReference type="ChEBI" id="CHEBI:30616"/>
    </ligand>
</feature>
<feature type="binding site" evidence="1">
    <location>
        <position position="126"/>
    </location>
    <ligand>
        <name>ATP</name>
        <dbReference type="ChEBI" id="CHEBI:30616"/>
    </ligand>
</feature>
<feature type="sequence variant" description="In strain: Bogota70." evidence="3">
    <original>I</original>
    <variation>V</variation>
    <location>
        <position position="79"/>
    </location>
</feature>
<feature type="non-terminal residue">
    <location>
        <position position="269"/>
    </location>
</feature>
<sequence>MPEEAETFAFQAEIAQLMSLIINTFYSNKEIFLRELISNASDALDKIRYXSXTDPXKLXXXXXXXXXXIPNKTAGTLTIIDTGIXMTKSDLVNNLGTIAKSGTKAFMEALQAGADISMIGQFGVGFYSAYLIADRVTVTSKNNDDEQYVWESSAGGSFTVKADNSEPLGRGTKIXLYIKEDQTDYLEESKIKEIVNKHSQFIGYPXKXXXEKERXKEVSDDEADDEKKDDEAKKDMDTDEPKIEDVGEDEDADKKDKDGKKKKTIKEKY</sequence>
<dbReference type="EMBL" id="AF006540">
    <property type="protein sequence ID" value="AAC07925.1"/>
    <property type="molecule type" value="Genomic_DNA"/>
</dbReference>
<dbReference type="EMBL" id="AF006541">
    <property type="protein sequence ID" value="AAC07926.1"/>
    <property type="molecule type" value="Genomic_DNA"/>
</dbReference>
<dbReference type="EMBL" id="AF006542">
    <property type="protein sequence ID" value="AAC07927.1"/>
    <property type="molecule type" value="Genomic_DNA"/>
</dbReference>
<dbReference type="EMBL" id="AF006543">
    <property type="protein sequence ID" value="AAC07928.1"/>
    <property type="molecule type" value="Genomic_DNA"/>
</dbReference>
<dbReference type="EMBL" id="AF006544">
    <property type="protein sequence ID" value="AAC07929.1"/>
    <property type="molecule type" value="Genomic_DNA"/>
</dbReference>
<dbReference type="EMBL" id="AF006545">
    <property type="protein sequence ID" value="AAC07930.1"/>
    <property type="molecule type" value="Genomic_DNA"/>
</dbReference>
<dbReference type="EMBL" id="AF006546">
    <property type="protein sequence ID" value="AAC07931.1"/>
    <property type="molecule type" value="Genomic_DNA"/>
</dbReference>
<dbReference type="EMBL" id="AF006547">
    <property type="protein sequence ID" value="AAC07932.1"/>
    <property type="molecule type" value="Genomic_DNA"/>
</dbReference>
<dbReference type="EMBL" id="AF006548">
    <property type="protein sequence ID" value="AAC07933.1"/>
    <property type="molecule type" value="Genomic_DNA"/>
</dbReference>
<dbReference type="GO" id="GO:0005737">
    <property type="term" value="C:cytoplasm"/>
    <property type="evidence" value="ECO:0007669"/>
    <property type="project" value="UniProtKB-SubCell"/>
</dbReference>
<dbReference type="GO" id="GO:0005524">
    <property type="term" value="F:ATP binding"/>
    <property type="evidence" value="ECO:0007669"/>
    <property type="project" value="UniProtKB-KW"/>
</dbReference>
<dbReference type="GO" id="GO:0016887">
    <property type="term" value="F:ATP hydrolysis activity"/>
    <property type="evidence" value="ECO:0007669"/>
    <property type="project" value="InterPro"/>
</dbReference>
<dbReference type="GO" id="GO:0140662">
    <property type="term" value="F:ATP-dependent protein folding chaperone"/>
    <property type="evidence" value="ECO:0007669"/>
    <property type="project" value="InterPro"/>
</dbReference>
<dbReference type="GO" id="GO:0051082">
    <property type="term" value="F:unfolded protein binding"/>
    <property type="evidence" value="ECO:0007669"/>
    <property type="project" value="InterPro"/>
</dbReference>
<dbReference type="CDD" id="cd16927">
    <property type="entry name" value="HATPase_Hsp90-like"/>
    <property type="match status" value="1"/>
</dbReference>
<dbReference type="FunFam" id="3.30.565.10:FF:000001">
    <property type="entry name" value="Heat shock protein HSP 90-alpha"/>
    <property type="match status" value="1"/>
</dbReference>
<dbReference type="Gene3D" id="3.30.565.10">
    <property type="entry name" value="Histidine kinase-like ATPase, C-terminal domain"/>
    <property type="match status" value="1"/>
</dbReference>
<dbReference type="InterPro" id="IPR036890">
    <property type="entry name" value="HATPase_C_sf"/>
</dbReference>
<dbReference type="InterPro" id="IPR019805">
    <property type="entry name" value="Heat_shock_protein_90_CS"/>
</dbReference>
<dbReference type="InterPro" id="IPR001404">
    <property type="entry name" value="Hsp90_fam"/>
</dbReference>
<dbReference type="InterPro" id="IPR020575">
    <property type="entry name" value="Hsp90_N"/>
</dbReference>
<dbReference type="PANTHER" id="PTHR11528">
    <property type="entry name" value="HEAT SHOCK PROTEIN 90 FAMILY MEMBER"/>
    <property type="match status" value="1"/>
</dbReference>
<dbReference type="Pfam" id="PF00183">
    <property type="entry name" value="HSP90"/>
    <property type="match status" value="1"/>
</dbReference>
<dbReference type="PRINTS" id="PR00775">
    <property type="entry name" value="HEATSHOCK90"/>
</dbReference>
<dbReference type="SMART" id="SM00387">
    <property type="entry name" value="HATPase_c"/>
    <property type="match status" value="1"/>
</dbReference>
<dbReference type="SUPFAM" id="SSF55874">
    <property type="entry name" value="ATPase domain of HSP90 chaperone/DNA topoisomerase II/histidine kinase"/>
    <property type="match status" value="1"/>
</dbReference>
<dbReference type="PROSITE" id="PS00298">
    <property type="entry name" value="HSP90"/>
    <property type="match status" value="1"/>
</dbReference>
<evidence type="ECO:0000250" key="1"/>
<evidence type="ECO:0000256" key="2">
    <source>
        <dbReference type="SAM" id="MobiDB-lite"/>
    </source>
</evidence>
<evidence type="ECO:0000269" key="3">
    <source>
    </source>
</evidence>
<evidence type="ECO:0000305" key="4"/>
<name>HSP83_DROPB</name>
<keyword id="KW-0067">ATP-binding</keyword>
<keyword id="KW-0143">Chaperone</keyword>
<keyword id="KW-0963">Cytoplasm</keyword>
<keyword id="KW-0547">Nucleotide-binding</keyword>
<keyword id="KW-0346">Stress response</keyword>
<protein>
    <recommendedName>
        <fullName>Heat shock protein 83</fullName>
    </recommendedName>
    <alternativeName>
        <fullName>HSP 82</fullName>
    </alternativeName>
</protein>
<accession>O16068</accession>
<accession>O16069</accession>
<accession>O16070</accession>
<accession>O16071</accession>
<accession>O16072</accession>
<accession>O16073</accession>
<accession>O16074</accession>
<accession>O16075</accession>
<accession>O61306</accession>
<gene>
    <name type="primary">Hsp83</name>
    <name type="synonym">Hsp82</name>
</gene>